<comment type="function">
    <text evidence="1">Specifically methylates the N7 position of guanine in position 527 of 16S rRNA.</text>
</comment>
<comment type="catalytic activity">
    <reaction evidence="1">
        <text>guanosine(527) in 16S rRNA + S-adenosyl-L-methionine = N(7)-methylguanosine(527) in 16S rRNA + S-adenosyl-L-homocysteine</text>
        <dbReference type="Rhea" id="RHEA:42732"/>
        <dbReference type="Rhea" id="RHEA-COMP:10209"/>
        <dbReference type="Rhea" id="RHEA-COMP:10210"/>
        <dbReference type="ChEBI" id="CHEBI:57856"/>
        <dbReference type="ChEBI" id="CHEBI:59789"/>
        <dbReference type="ChEBI" id="CHEBI:74269"/>
        <dbReference type="ChEBI" id="CHEBI:74480"/>
        <dbReference type="EC" id="2.1.1.170"/>
    </reaction>
</comment>
<comment type="subcellular location">
    <subcellularLocation>
        <location evidence="1">Cytoplasm</location>
    </subcellularLocation>
</comment>
<comment type="similarity">
    <text evidence="1">Belongs to the methyltransferase superfamily. RNA methyltransferase RsmG family.</text>
</comment>
<comment type="sequence caution" evidence="3">
    <conflict type="erroneous initiation">
        <sequence resource="EMBL-CDS" id="CAE79511"/>
    </conflict>
</comment>
<feature type="chain" id="PRO_0000184220" description="Ribosomal RNA small subunit methyltransferase G 2">
    <location>
        <begin position="1"/>
        <end position="255"/>
    </location>
</feature>
<feature type="region of interest" description="Disordered" evidence="2">
    <location>
        <begin position="233"/>
        <end position="255"/>
    </location>
</feature>
<feature type="compositionally biased region" description="Acidic residues" evidence="2">
    <location>
        <begin position="233"/>
        <end position="245"/>
    </location>
</feature>
<feature type="compositionally biased region" description="Basic and acidic residues" evidence="2">
    <location>
        <begin position="246"/>
        <end position="255"/>
    </location>
</feature>
<feature type="binding site" evidence="1">
    <location>
        <position position="90"/>
    </location>
    <ligand>
        <name>S-adenosyl-L-methionine</name>
        <dbReference type="ChEBI" id="CHEBI:59789"/>
    </ligand>
</feature>
<feature type="binding site" evidence="1">
    <location>
        <position position="95"/>
    </location>
    <ligand>
        <name>S-adenosyl-L-methionine</name>
        <dbReference type="ChEBI" id="CHEBI:59789"/>
    </ligand>
</feature>
<feature type="binding site" evidence="1">
    <location>
        <position position="155"/>
    </location>
    <ligand>
        <name>S-adenosyl-L-methionine</name>
        <dbReference type="ChEBI" id="CHEBI:59789"/>
    </ligand>
</feature>
<name>RSMG2_BDEBA</name>
<dbReference type="EC" id="2.1.1.170" evidence="1"/>
<dbReference type="EMBL" id="BX842650">
    <property type="protein sequence ID" value="CAE79511.1"/>
    <property type="status" value="ALT_INIT"/>
    <property type="molecule type" value="Genomic_DNA"/>
</dbReference>
<dbReference type="RefSeq" id="WP_011164113.1">
    <property type="nucleotide sequence ID" value="NC_005363.1"/>
</dbReference>
<dbReference type="SMR" id="Q6MMJ3"/>
<dbReference type="STRING" id="264462.Bd1636"/>
<dbReference type="GeneID" id="93012625"/>
<dbReference type="KEGG" id="bba:Bd1636"/>
<dbReference type="eggNOG" id="COG0357">
    <property type="taxonomic scope" value="Bacteria"/>
</dbReference>
<dbReference type="HOGENOM" id="CLU_965282_0_0_7"/>
<dbReference type="Proteomes" id="UP000008080">
    <property type="component" value="Chromosome"/>
</dbReference>
<dbReference type="GO" id="GO:0005829">
    <property type="term" value="C:cytosol"/>
    <property type="evidence" value="ECO:0007669"/>
    <property type="project" value="TreeGrafter"/>
</dbReference>
<dbReference type="GO" id="GO:0070043">
    <property type="term" value="F:rRNA (guanine-N7-)-methyltransferase activity"/>
    <property type="evidence" value="ECO:0007669"/>
    <property type="project" value="UniProtKB-UniRule"/>
</dbReference>
<dbReference type="Gene3D" id="3.40.50.150">
    <property type="entry name" value="Vaccinia Virus protein VP39"/>
    <property type="match status" value="1"/>
</dbReference>
<dbReference type="HAMAP" id="MF_00074">
    <property type="entry name" value="16SrRNA_methyltr_G"/>
    <property type="match status" value="1"/>
</dbReference>
<dbReference type="InterPro" id="IPR003682">
    <property type="entry name" value="rRNA_ssu_MeTfrase_G"/>
</dbReference>
<dbReference type="InterPro" id="IPR029063">
    <property type="entry name" value="SAM-dependent_MTases_sf"/>
</dbReference>
<dbReference type="NCBIfam" id="TIGR00138">
    <property type="entry name" value="rsmG_gidB"/>
    <property type="match status" value="1"/>
</dbReference>
<dbReference type="PANTHER" id="PTHR31760">
    <property type="entry name" value="S-ADENOSYL-L-METHIONINE-DEPENDENT METHYLTRANSFERASES SUPERFAMILY PROTEIN"/>
    <property type="match status" value="1"/>
</dbReference>
<dbReference type="PANTHER" id="PTHR31760:SF0">
    <property type="entry name" value="S-ADENOSYL-L-METHIONINE-DEPENDENT METHYLTRANSFERASES SUPERFAMILY PROTEIN"/>
    <property type="match status" value="1"/>
</dbReference>
<dbReference type="Pfam" id="PF02527">
    <property type="entry name" value="GidB"/>
    <property type="match status" value="1"/>
</dbReference>
<dbReference type="PIRSF" id="PIRSF003078">
    <property type="entry name" value="GidB"/>
    <property type="match status" value="1"/>
</dbReference>
<dbReference type="SUPFAM" id="SSF53335">
    <property type="entry name" value="S-adenosyl-L-methionine-dependent methyltransferases"/>
    <property type="match status" value="1"/>
</dbReference>
<accession>Q6MMJ3</accession>
<sequence length="255" mass="29619">MGRHKKPETIYDIHEANDRLADVFRNHGFDLVSHSQRQQLAHFYRLLMLNQEKENFTRLLKLRDVAIKHFIDSIIIMKYTDLQFPLLDVGTGPGFPGIPLKIMYPDQQILLGEGVQRRVEFLKHVRSEMNLKNLDILGRNINKHCVYPVRGAITRAVEDIGNTLGNVMSCLEIGGRVYFMKGPGVGPEIEAAKKDWGEYYKLVQDVAYSLPQTPHERRLVVYEKIKNMPLPEEDEGEELLMDELSNEEKRRWAKY</sequence>
<gene>
    <name evidence="1" type="primary">rsmG2</name>
    <name type="ordered locus">Bd1636</name>
</gene>
<reference key="1">
    <citation type="journal article" date="2004" name="Science">
        <title>A predator unmasked: life cycle of Bdellovibrio bacteriovorus from a genomic perspective.</title>
        <authorList>
            <person name="Rendulic S."/>
            <person name="Jagtap P."/>
            <person name="Rosinus A."/>
            <person name="Eppinger M."/>
            <person name="Baar C."/>
            <person name="Lanz C."/>
            <person name="Keller H."/>
            <person name="Lambert C."/>
            <person name="Evans K.J."/>
            <person name="Goesmann A."/>
            <person name="Meyer F."/>
            <person name="Sockett R.E."/>
            <person name="Schuster S.C."/>
        </authorList>
    </citation>
    <scope>NUCLEOTIDE SEQUENCE [LARGE SCALE GENOMIC DNA]</scope>
    <source>
        <strain>ATCC 15356 / DSM 50701 / NCIMB 9529 / HD100</strain>
    </source>
</reference>
<protein>
    <recommendedName>
        <fullName evidence="1">Ribosomal RNA small subunit methyltransferase G 2</fullName>
        <ecNumber evidence="1">2.1.1.170</ecNumber>
    </recommendedName>
    <alternativeName>
        <fullName evidence="1">16S rRNA 7-methylguanosine methyltransferase 2</fullName>
        <shortName evidence="1">16S rRNA m7G methyltransferase 2</shortName>
    </alternativeName>
</protein>
<proteinExistence type="inferred from homology"/>
<evidence type="ECO:0000255" key="1">
    <source>
        <dbReference type="HAMAP-Rule" id="MF_00074"/>
    </source>
</evidence>
<evidence type="ECO:0000256" key="2">
    <source>
        <dbReference type="SAM" id="MobiDB-lite"/>
    </source>
</evidence>
<evidence type="ECO:0000305" key="3"/>
<organism>
    <name type="scientific">Bdellovibrio bacteriovorus (strain ATCC 15356 / DSM 50701 / NCIMB 9529 / HD100)</name>
    <dbReference type="NCBI Taxonomy" id="264462"/>
    <lineage>
        <taxon>Bacteria</taxon>
        <taxon>Pseudomonadati</taxon>
        <taxon>Bdellovibrionota</taxon>
        <taxon>Bdellovibrionia</taxon>
        <taxon>Bdellovibrionales</taxon>
        <taxon>Pseudobdellovibrionaceae</taxon>
        <taxon>Bdellovibrio</taxon>
    </lineage>
</organism>
<keyword id="KW-0963">Cytoplasm</keyword>
<keyword id="KW-0489">Methyltransferase</keyword>
<keyword id="KW-1185">Reference proteome</keyword>
<keyword id="KW-0698">rRNA processing</keyword>
<keyword id="KW-0949">S-adenosyl-L-methionine</keyword>
<keyword id="KW-0808">Transferase</keyword>